<keyword id="KW-0007">Acetylation</keyword>
<keyword id="KW-0963">Cytoplasm</keyword>
<keyword id="KW-1185">Reference proteome</keyword>
<sequence length="244" mass="27759">MDKSELVQKAKLSEQAERYDDMAASMKAVTELGAELSNEERNLLSVAYKNVVGARRSSWRVISSIEQKTEGNDKRQQMAREYREKVETELQDICKDVLDLLDRFLVPNATPPESKVFYLKMKGDYYRYLSEVASGDSKQETVASSQQAYQEAFEISKSEMQPTHPIRLGLALNFSVFYYEILNSPEKACSLAKSAFDEAIAELDTLNEESYKDSTLIMQLLRDNLTLWTSENQGEEADNVEGDN</sequence>
<reference key="1">
    <citation type="submission" date="2004-10" db="EMBL/GenBank/DDBJ databases">
        <authorList>
            <consortium name="NIH - Xenopus Gene Collection (XGC) project"/>
        </authorList>
    </citation>
    <scope>NUCLEOTIDE SEQUENCE [LARGE SCALE MRNA]</scope>
    <source>
        <tissue>Embryo</tissue>
    </source>
</reference>
<accession>Q5XHK2</accession>
<protein>
    <recommendedName>
        <fullName>14-3-3 protein beta/alpha-A</fullName>
    </recommendedName>
</protein>
<gene>
    <name type="primary">ywhab-a</name>
</gene>
<organism>
    <name type="scientific">Xenopus laevis</name>
    <name type="common">African clawed frog</name>
    <dbReference type="NCBI Taxonomy" id="8355"/>
    <lineage>
        <taxon>Eukaryota</taxon>
        <taxon>Metazoa</taxon>
        <taxon>Chordata</taxon>
        <taxon>Craniata</taxon>
        <taxon>Vertebrata</taxon>
        <taxon>Euteleostomi</taxon>
        <taxon>Amphibia</taxon>
        <taxon>Batrachia</taxon>
        <taxon>Anura</taxon>
        <taxon>Pipoidea</taxon>
        <taxon>Pipidae</taxon>
        <taxon>Xenopodinae</taxon>
        <taxon>Xenopus</taxon>
        <taxon>Xenopus</taxon>
    </lineage>
</organism>
<name>143BA_XENLA</name>
<dbReference type="EMBL" id="BC084055">
    <property type="protein sequence ID" value="AAH84055.1"/>
    <property type="molecule type" value="mRNA"/>
</dbReference>
<dbReference type="RefSeq" id="NP_001165524.1">
    <property type="nucleotide sequence ID" value="NM_001172053.1"/>
</dbReference>
<dbReference type="SMR" id="Q5XHK2"/>
<dbReference type="BioGRID" id="100601">
    <property type="interactions" value="1"/>
</dbReference>
<dbReference type="DNASU" id="399276"/>
<dbReference type="GeneID" id="399276"/>
<dbReference type="KEGG" id="xla:399276"/>
<dbReference type="AGR" id="Xenbase:XB-GENE-6254183"/>
<dbReference type="CTD" id="399276"/>
<dbReference type="Xenbase" id="XB-GENE-6254183">
    <property type="gene designation" value="ywhab.L"/>
</dbReference>
<dbReference type="OMA" id="AECKVFY"/>
<dbReference type="OrthoDB" id="10260625at2759"/>
<dbReference type="Proteomes" id="UP000186698">
    <property type="component" value="Chromosome 9_10L"/>
</dbReference>
<dbReference type="Bgee" id="399276">
    <property type="expression patterns" value="Expressed in brain and 19 other cell types or tissues"/>
</dbReference>
<dbReference type="GO" id="GO:0005737">
    <property type="term" value="C:cytoplasm"/>
    <property type="evidence" value="ECO:0000318"/>
    <property type="project" value="GO_Central"/>
</dbReference>
<dbReference type="GO" id="GO:0008104">
    <property type="term" value="P:protein localization"/>
    <property type="evidence" value="ECO:0000318"/>
    <property type="project" value="GO_Central"/>
</dbReference>
<dbReference type="GO" id="GO:0007165">
    <property type="term" value="P:signal transduction"/>
    <property type="evidence" value="ECO:0000318"/>
    <property type="project" value="GO_Central"/>
</dbReference>
<dbReference type="FunFam" id="1.20.190.20:FF:000001">
    <property type="entry name" value="14-3-3 gamma 1"/>
    <property type="match status" value="1"/>
</dbReference>
<dbReference type="Gene3D" id="1.20.190.20">
    <property type="entry name" value="14-3-3 domain"/>
    <property type="match status" value="1"/>
</dbReference>
<dbReference type="InterPro" id="IPR000308">
    <property type="entry name" value="14-3-3"/>
</dbReference>
<dbReference type="InterPro" id="IPR023409">
    <property type="entry name" value="14-3-3_CS"/>
</dbReference>
<dbReference type="InterPro" id="IPR036815">
    <property type="entry name" value="14-3-3_dom_sf"/>
</dbReference>
<dbReference type="InterPro" id="IPR023410">
    <property type="entry name" value="14-3-3_domain"/>
</dbReference>
<dbReference type="PANTHER" id="PTHR18860">
    <property type="entry name" value="14-3-3 PROTEIN"/>
    <property type="match status" value="1"/>
</dbReference>
<dbReference type="Pfam" id="PF00244">
    <property type="entry name" value="14-3-3"/>
    <property type="match status" value="1"/>
</dbReference>
<dbReference type="PIRSF" id="PIRSF000868">
    <property type="entry name" value="14-3-3"/>
    <property type="match status" value="1"/>
</dbReference>
<dbReference type="PRINTS" id="PR00305">
    <property type="entry name" value="1433ZETA"/>
</dbReference>
<dbReference type="SMART" id="SM00101">
    <property type="entry name" value="14_3_3"/>
    <property type="match status" value="1"/>
</dbReference>
<dbReference type="SUPFAM" id="SSF48445">
    <property type="entry name" value="14-3-3 protein"/>
    <property type="match status" value="1"/>
</dbReference>
<dbReference type="PROSITE" id="PS00796">
    <property type="entry name" value="1433_1"/>
    <property type="match status" value="1"/>
</dbReference>
<dbReference type="PROSITE" id="PS00797">
    <property type="entry name" value="1433_2"/>
    <property type="match status" value="1"/>
</dbReference>
<comment type="function">
    <text evidence="1">Adapter protein implicated in the regulation of a large spectrum of both general and specialized signaling pathways. Binds to a large number of partners, usually by recognition of a phosphoserine or phosphothreonine motif. Binding generally results in the modulation of the activity of the binding partner (By similarity).</text>
</comment>
<comment type="subunit">
    <text evidence="1">Homodimer, and heterodimer with other family members.</text>
</comment>
<comment type="subcellular location">
    <subcellularLocation>
        <location evidence="1">Cytoplasm</location>
    </subcellularLocation>
</comment>
<comment type="similarity">
    <text evidence="2">Belongs to the 14-3-3 family.</text>
</comment>
<feature type="chain" id="PRO_0000058598" description="14-3-3 protein beta/alpha-A">
    <location>
        <begin position="1"/>
        <end position="244"/>
    </location>
</feature>
<feature type="site" description="Interaction with phosphoserine on interacting protein" evidence="1">
    <location>
        <position position="56"/>
    </location>
</feature>
<feature type="site" description="Interaction with phosphoserine on interacting protein" evidence="1">
    <location>
        <position position="127"/>
    </location>
</feature>
<feature type="modified residue" description="N-acetylmethionine" evidence="1">
    <location>
        <position position="1"/>
    </location>
</feature>
<evidence type="ECO:0000250" key="1"/>
<evidence type="ECO:0000305" key="2"/>
<proteinExistence type="evidence at transcript level"/>